<comment type="function">
    <text evidence="1">Plays a role in cell envelope biogenesis, maintenance of cell envelope integrity and membrane homeostasis.</text>
</comment>
<comment type="subcellular location">
    <subcellularLocation>
        <location evidence="1">Cell inner membrane</location>
        <topology evidence="1">Multi-pass membrane protein</topology>
    </subcellularLocation>
</comment>
<comment type="similarity">
    <text evidence="1">Belongs to the YciB family.</text>
</comment>
<proteinExistence type="inferred from homology"/>
<accession>B5F4L5</accession>
<reference key="1">
    <citation type="journal article" date="2011" name="J. Bacteriol.">
        <title>Comparative genomics of 28 Salmonella enterica isolates: evidence for CRISPR-mediated adaptive sublineage evolution.</title>
        <authorList>
            <person name="Fricke W.F."/>
            <person name="Mammel M.K."/>
            <person name="McDermott P.F."/>
            <person name="Tartera C."/>
            <person name="White D.G."/>
            <person name="Leclerc J.E."/>
            <person name="Ravel J."/>
            <person name="Cebula T.A."/>
        </authorList>
    </citation>
    <scope>NUCLEOTIDE SEQUENCE [LARGE SCALE GENOMIC DNA]</scope>
    <source>
        <strain>SL483</strain>
    </source>
</reference>
<sequence length="179" mass="20763">MKQFLDFLPLVVFFAFYKLYDIYAATSALIVATAIVLIYSWVRYRKIEKMALITFVLVAVFGGLTLFFHNDEFIKWKVTVIYALFAGALLISQWVMKKPLIQRMLGKELALPQQVWSKLNLAWALFFIACGLANIYIAFWLPQNIWVNFKVFGLTALTLIFTLLSGVYIYRHLPQEDKS</sequence>
<protein>
    <recommendedName>
        <fullName evidence="1">Inner membrane-spanning protein YciB</fullName>
    </recommendedName>
</protein>
<evidence type="ECO:0000255" key="1">
    <source>
        <dbReference type="HAMAP-Rule" id="MF_00189"/>
    </source>
</evidence>
<organism>
    <name type="scientific">Salmonella agona (strain SL483)</name>
    <dbReference type="NCBI Taxonomy" id="454166"/>
    <lineage>
        <taxon>Bacteria</taxon>
        <taxon>Pseudomonadati</taxon>
        <taxon>Pseudomonadota</taxon>
        <taxon>Gammaproteobacteria</taxon>
        <taxon>Enterobacterales</taxon>
        <taxon>Enterobacteriaceae</taxon>
        <taxon>Salmonella</taxon>
    </lineage>
</organism>
<keyword id="KW-0997">Cell inner membrane</keyword>
<keyword id="KW-1003">Cell membrane</keyword>
<keyword id="KW-0472">Membrane</keyword>
<keyword id="KW-0812">Transmembrane</keyword>
<keyword id="KW-1133">Transmembrane helix</keyword>
<dbReference type="EMBL" id="CP001138">
    <property type="protein sequence ID" value="ACH50942.1"/>
    <property type="molecule type" value="Genomic_DNA"/>
</dbReference>
<dbReference type="RefSeq" id="WP_000808682.1">
    <property type="nucleotide sequence ID" value="NC_011149.1"/>
</dbReference>
<dbReference type="KEGG" id="sea:SeAg_B1411"/>
<dbReference type="HOGENOM" id="CLU_089554_2_0_6"/>
<dbReference type="Proteomes" id="UP000008819">
    <property type="component" value="Chromosome"/>
</dbReference>
<dbReference type="GO" id="GO:0005886">
    <property type="term" value="C:plasma membrane"/>
    <property type="evidence" value="ECO:0007669"/>
    <property type="project" value="UniProtKB-SubCell"/>
</dbReference>
<dbReference type="HAMAP" id="MF_00189">
    <property type="entry name" value="YciB"/>
    <property type="match status" value="1"/>
</dbReference>
<dbReference type="InterPro" id="IPR006008">
    <property type="entry name" value="YciB"/>
</dbReference>
<dbReference type="NCBIfam" id="TIGR00997">
    <property type="entry name" value="ispZ"/>
    <property type="match status" value="1"/>
</dbReference>
<dbReference type="NCBIfam" id="NF001324">
    <property type="entry name" value="PRK00259.1-2"/>
    <property type="match status" value="1"/>
</dbReference>
<dbReference type="NCBIfam" id="NF001325">
    <property type="entry name" value="PRK00259.1-3"/>
    <property type="match status" value="1"/>
</dbReference>
<dbReference type="NCBIfam" id="NF001326">
    <property type="entry name" value="PRK00259.1-4"/>
    <property type="match status" value="1"/>
</dbReference>
<dbReference type="PANTHER" id="PTHR36917:SF1">
    <property type="entry name" value="INNER MEMBRANE-SPANNING PROTEIN YCIB"/>
    <property type="match status" value="1"/>
</dbReference>
<dbReference type="PANTHER" id="PTHR36917">
    <property type="entry name" value="INTRACELLULAR SEPTATION PROTEIN A-RELATED"/>
    <property type="match status" value="1"/>
</dbReference>
<dbReference type="Pfam" id="PF04279">
    <property type="entry name" value="IspA"/>
    <property type="match status" value="1"/>
</dbReference>
<name>YCIB_SALA4</name>
<feature type="chain" id="PRO_1000098890" description="Inner membrane-spanning protein YciB">
    <location>
        <begin position="1"/>
        <end position="179"/>
    </location>
</feature>
<feature type="transmembrane region" description="Helical" evidence="1">
    <location>
        <begin position="22"/>
        <end position="42"/>
    </location>
</feature>
<feature type="transmembrane region" description="Helical" evidence="1">
    <location>
        <begin position="50"/>
        <end position="70"/>
    </location>
</feature>
<feature type="transmembrane region" description="Helical" evidence="1">
    <location>
        <begin position="76"/>
        <end position="96"/>
    </location>
</feature>
<feature type="transmembrane region" description="Helical" evidence="1">
    <location>
        <begin position="121"/>
        <end position="141"/>
    </location>
</feature>
<feature type="transmembrane region" description="Helical" evidence="1">
    <location>
        <begin position="149"/>
        <end position="169"/>
    </location>
</feature>
<gene>
    <name evidence="1" type="primary">yciB</name>
    <name type="ordered locus">SeAg_B1411</name>
</gene>